<sequence length="105" mass="11126">MFEGFDFSKMGEVLEKAKEQAAALEAESLNKEFGAKSGGGLVSVKANGKGEILDITIDDSLLEDKESLQILLISAINDVLKMAEDDKKAIAGRMLGGLGDFGFKG</sequence>
<organism>
    <name type="scientific">Campylobacter curvus (strain 525.92)</name>
    <dbReference type="NCBI Taxonomy" id="360105"/>
    <lineage>
        <taxon>Bacteria</taxon>
        <taxon>Pseudomonadati</taxon>
        <taxon>Campylobacterota</taxon>
        <taxon>Epsilonproteobacteria</taxon>
        <taxon>Campylobacterales</taxon>
        <taxon>Campylobacteraceae</taxon>
        <taxon>Campylobacter</taxon>
    </lineage>
</organism>
<keyword id="KW-0963">Cytoplasm</keyword>
<keyword id="KW-0238">DNA-binding</keyword>
<keyword id="KW-1185">Reference proteome</keyword>
<reference key="1">
    <citation type="submission" date="2007-07" db="EMBL/GenBank/DDBJ databases">
        <title>Genome sequence of Campylobacter curvus 525.92 isolated from human feces.</title>
        <authorList>
            <person name="Fouts D.E."/>
            <person name="Mongodin E.F."/>
            <person name="Puiu D."/>
            <person name="Sebastian Y."/>
            <person name="Miller W.G."/>
            <person name="Mandrell R.E."/>
            <person name="Lastovica A.J."/>
            <person name="Nelson K.E."/>
        </authorList>
    </citation>
    <scope>NUCLEOTIDE SEQUENCE [LARGE SCALE GENOMIC DNA]</scope>
    <source>
        <strain>525.92</strain>
    </source>
</reference>
<protein>
    <recommendedName>
        <fullName evidence="1">Nucleoid-associated protein Ccur92_18190</fullName>
    </recommendedName>
</protein>
<dbReference type="EMBL" id="CP000767">
    <property type="protein sequence ID" value="EAU00355.1"/>
    <property type="molecule type" value="Genomic_DNA"/>
</dbReference>
<dbReference type="RefSeq" id="WP_009649747.1">
    <property type="nucleotide sequence ID" value="NC_009715.2"/>
</dbReference>
<dbReference type="SMR" id="A7H0Y1"/>
<dbReference type="STRING" id="360105.CCV52592_0073"/>
<dbReference type="KEGG" id="ccv:CCV52592_0073"/>
<dbReference type="HOGENOM" id="CLU_140930_2_1_7"/>
<dbReference type="OrthoDB" id="5343857at2"/>
<dbReference type="Proteomes" id="UP000006380">
    <property type="component" value="Chromosome"/>
</dbReference>
<dbReference type="GO" id="GO:0043590">
    <property type="term" value="C:bacterial nucleoid"/>
    <property type="evidence" value="ECO:0007669"/>
    <property type="project" value="UniProtKB-UniRule"/>
</dbReference>
<dbReference type="GO" id="GO:0005737">
    <property type="term" value="C:cytoplasm"/>
    <property type="evidence" value="ECO:0007669"/>
    <property type="project" value="UniProtKB-UniRule"/>
</dbReference>
<dbReference type="GO" id="GO:0003677">
    <property type="term" value="F:DNA binding"/>
    <property type="evidence" value="ECO:0007669"/>
    <property type="project" value="UniProtKB-UniRule"/>
</dbReference>
<dbReference type="Gene3D" id="3.30.1310.10">
    <property type="entry name" value="Nucleoid-associated protein YbaB-like domain"/>
    <property type="match status" value="1"/>
</dbReference>
<dbReference type="HAMAP" id="MF_00274">
    <property type="entry name" value="DNA_YbaB_EbfC"/>
    <property type="match status" value="1"/>
</dbReference>
<dbReference type="InterPro" id="IPR036894">
    <property type="entry name" value="YbaB-like_sf"/>
</dbReference>
<dbReference type="InterPro" id="IPR004401">
    <property type="entry name" value="YbaB/EbfC"/>
</dbReference>
<dbReference type="NCBIfam" id="TIGR00103">
    <property type="entry name" value="DNA_YbaB_EbfC"/>
    <property type="match status" value="1"/>
</dbReference>
<dbReference type="Pfam" id="PF02575">
    <property type="entry name" value="YbaB_DNA_bd"/>
    <property type="match status" value="1"/>
</dbReference>
<dbReference type="PIRSF" id="PIRSF004555">
    <property type="entry name" value="UCP004555"/>
    <property type="match status" value="1"/>
</dbReference>
<dbReference type="SUPFAM" id="SSF82607">
    <property type="entry name" value="YbaB-like"/>
    <property type="match status" value="1"/>
</dbReference>
<evidence type="ECO:0000255" key="1">
    <source>
        <dbReference type="HAMAP-Rule" id="MF_00274"/>
    </source>
</evidence>
<comment type="function">
    <text evidence="1">Binds to DNA and alters its conformation. May be involved in regulation of gene expression, nucleoid organization and DNA protection.</text>
</comment>
<comment type="subunit">
    <text evidence="1">Homodimer.</text>
</comment>
<comment type="subcellular location">
    <subcellularLocation>
        <location evidence="1">Cytoplasm</location>
        <location evidence="1">Nucleoid</location>
    </subcellularLocation>
</comment>
<comment type="similarity">
    <text evidence="1">Belongs to the YbaB/EbfC family.</text>
</comment>
<accession>A7H0Y1</accession>
<proteinExistence type="inferred from homology"/>
<name>Y1819_CAMC5</name>
<feature type="chain" id="PRO_1000003716" description="Nucleoid-associated protein Ccur92_18190">
    <location>
        <begin position="1"/>
        <end position="105"/>
    </location>
</feature>
<gene>
    <name type="ordered locus">Ccur92_18190</name>
    <name type="ORF">CCV52592_0073</name>
</gene>